<gene>
    <name evidence="1" type="primary">rimO</name>
    <name type="ordered locus">Pcar_0034</name>
</gene>
<protein>
    <recommendedName>
        <fullName evidence="1">Ribosomal protein uS12 methylthiotransferase RimO</fullName>
        <shortName evidence="1">uS12 MTTase</shortName>
        <shortName evidence="1">uS12 methylthiotransferase</shortName>
        <ecNumber evidence="1">2.8.4.4</ecNumber>
    </recommendedName>
    <alternativeName>
        <fullName evidence="1">Ribosomal protein uS12 (aspartate-C(3))-methylthiotransferase</fullName>
    </alternativeName>
    <alternativeName>
        <fullName evidence="1">Ribosome maturation factor RimO</fullName>
    </alternativeName>
</protein>
<name>RIMO_SYNC1</name>
<accession>Q3A8J5</accession>
<comment type="function">
    <text evidence="1">Catalyzes the methylthiolation of an aspartic acid residue of ribosomal protein uS12.</text>
</comment>
<comment type="catalytic activity">
    <reaction evidence="1">
        <text>L-aspartate(89)-[ribosomal protein uS12]-hydrogen + (sulfur carrier)-SH + AH2 + 2 S-adenosyl-L-methionine = 3-methylsulfanyl-L-aspartate(89)-[ribosomal protein uS12]-hydrogen + (sulfur carrier)-H + 5'-deoxyadenosine + L-methionine + A + S-adenosyl-L-homocysteine + 2 H(+)</text>
        <dbReference type="Rhea" id="RHEA:37087"/>
        <dbReference type="Rhea" id="RHEA-COMP:10460"/>
        <dbReference type="Rhea" id="RHEA-COMP:10461"/>
        <dbReference type="Rhea" id="RHEA-COMP:14737"/>
        <dbReference type="Rhea" id="RHEA-COMP:14739"/>
        <dbReference type="ChEBI" id="CHEBI:13193"/>
        <dbReference type="ChEBI" id="CHEBI:15378"/>
        <dbReference type="ChEBI" id="CHEBI:17319"/>
        <dbReference type="ChEBI" id="CHEBI:17499"/>
        <dbReference type="ChEBI" id="CHEBI:29917"/>
        <dbReference type="ChEBI" id="CHEBI:29961"/>
        <dbReference type="ChEBI" id="CHEBI:57844"/>
        <dbReference type="ChEBI" id="CHEBI:57856"/>
        <dbReference type="ChEBI" id="CHEBI:59789"/>
        <dbReference type="ChEBI" id="CHEBI:64428"/>
        <dbReference type="ChEBI" id="CHEBI:73599"/>
        <dbReference type="EC" id="2.8.4.4"/>
    </reaction>
</comment>
<comment type="cofactor">
    <cofactor evidence="1">
        <name>[4Fe-4S] cluster</name>
        <dbReference type="ChEBI" id="CHEBI:49883"/>
    </cofactor>
    <text evidence="1">Binds 2 [4Fe-4S] clusters. One cluster is coordinated with 3 cysteines and an exchangeable S-adenosyl-L-methionine.</text>
</comment>
<comment type="subcellular location">
    <subcellularLocation>
        <location evidence="1">Cytoplasm</location>
    </subcellularLocation>
</comment>
<comment type="similarity">
    <text evidence="1">Belongs to the methylthiotransferase family. RimO subfamily.</text>
</comment>
<organism>
    <name type="scientific">Syntrophotalea carbinolica (strain DSM 2380 / NBRC 103641 / GraBd1)</name>
    <name type="common">Pelobacter carbinolicus</name>
    <dbReference type="NCBI Taxonomy" id="338963"/>
    <lineage>
        <taxon>Bacteria</taxon>
        <taxon>Pseudomonadati</taxon>
        <taxon>Thermodesulfobacteriota</taxon>
        <taxon>Desulfuromonadia</taxon>
        <taxon>Desulfuromonadales</taxon>
        <taxon>Syntrophotaleaceae</taxon>
        <taxon>Syntrophotalea</taxon>
    </lineage>
</organism>
<feature type="chain" id="PRO_0000374913" description="Ribosomal protein uS12 methylthiotransferase RimO">
    <location>
        <begin position="1"/>
        <end position="455"/>
    </location>
</feature>
<feature type="domain" description="MTTase N-terminal" evidence="1">
    <location>
        <begin position="10"/>
        <end position="126"/>
    </location>
</feature>
<feature type="domain" description="Radical SAM core" evidence="2">
    <location>
        <begin position="150"/>
        <end position="380"/>
    </location>
</feature>
<feature type="domain" description="TRAM" evidence="1">
    <location>
        <begin position="383"/>
        <end position="451"/>
    </location>
</feature>
<feature type="binding site" evidence="1">
    <location>
        <position position="19"/>
    </location>
    <ligand>
        <name>[4Fe-4S] cluster</name>
        <dbReference type="ChEBI" id="CHEBI:49883"/>
        <label>1</label>
    </ligand>
</feature>
<feature type="binding site" evidence="1">
    <location>
        <position position="55"/>
    </location>
    <ligand>
        <name>[4Fe-4S] cluster</name>
        <dbReference type="ChEBI" id="CHEBI:49883"/>
        <label>1</label>
    </ligand>
</feature>
<feature type="binding site" evidence="1">
    <location>
        <position position="89"/>
    </location>
    <ligand>
        <name>[4Fe-4S] cluster</name>
        <dbReference type="ChEBI" id="CHEBI:49883"/>
        <label>1</label>
    </ligand>
</feature>
<feature type="binding site" evidence="1">
    <location>
        <position position="164"/>
    </location>
    <ligand>
        <name>[4Fe-4S] cluster</name>
        <dbReference type="ChEBI" id="CHEBI:49883"/>
        <label>2</label>
        <note>4Fe-4S-S-AdoMet</note>
    </ligand>
</feature>
<feature type="binding site" evidence="1">
    <location>
        <position position="168"/>
    </location>
    <ligand>
        <name>[4Fe-4S] cluster</name>
        <dbReference type="ChEBI" id="CHEBI:49883"/>
        <label>2</label>
        <note>4Fe-4S-S-AdoMet</note>
    </ligand>
</feature>
<feature type="binding site" evidence="1">
    <location>
        <position position="171"/>
    </location>
    <ligand>
        <name>[4Fe-4S] cluster</name>
        <dbReference type="ChEBI" id="CHEBI:49883"/>
        <label>2</label>
        <note>4Fe-4S-S-AdoMet</note>
    </ligand>
</feature>
<sequence length="455" mass="50896">MKESDSVEKRKVSMISLGCAKNLVDAEVMLGYLPQDRFEITTDEAQADIIIVNTCGFISDAKEESVETLLEAIEYKKSGNCTLLVVTGCLSQRYAEDMAKELPEVDILLGTGDVPRILELIEAHDRGEDVRQSVGLPQYLYDHTTPRVASSPFYSTYVKIAEGCNNLCSYCIIPQLRGPLRSRSIASVVAEVERLVAAGAQEVNLIAQDITAFGADRHDGASLEGLLRELVKISELRWLRLLYAYPDGISDELIELVATEEKICSYFDVPLQHIDDRVLARMNRRVGEDTIRDLIHRMRQRIPDLTLRTSFIVGFPGETDAEFAKLLAFVEEGHFDRVGVFRYSREEDTPAASLPDQVPEGVKKSRYNKLMKAQQRVSFRRNRALIGRVEPVLVEGYSEETELLLSGRSIRQAPDVDGQVYITAGQADVGQIVPLRITDSSEYDLIGEIVDESDE</sequence>
<reference key="1">
    <citation type="submission" date="2005-10" db="EMBL/GenBank/DDBJ databases">
        <title>Complete sequence of Pelobacter carbinolicus DSM 2380.</title>
        <authorList>
            <person name="Copeland A."/>
            <person name="Lucas S."/>
            <person name="Lapidus A."/>
            <person name="Barry K."/>
            <person name="Detter J.C."/>
            <person name="Glavina T."/>
            <person name="Hammon N."/>
            <person name="Israni S."/>
            <person name="Pitluck S."/>
            <person name="Chertkov O."/>
            <person name="Schmutz J."/>
            <person name="Larimer F."/>
            <person name="Land M."/>
            <person name="Kyrpides N."/>
            <person name="Ivanova N."/>
            <person name="Richardson P."/>
        </authorList>
    </citation>
    <scope>NUCLEOTIDE SEQUENCE [LARGE SCALE GENOMIC DNA]</scope>
    <source>
        <strain>DSM 2380 / NBRC 103641 / GraBd1</strain>
    </source>
</reference>
<evidence type="ECO:0000255" key="1">
    <source>
        <dbReference type="HAMAP-Rule" id="MF_01865"/>
    </source>
</evidence>
<evidence type="ECO:0000255" key="2">
    <source>
        <dbReference type="PROSITE-ProRule" id="PRU01266"/>
    </source>
</evidence>
<keyword id="KW-0004">4Fe-4S</keyword>
<keyword id="KW-0963">Cytoplasm</keyword>
<keyword id="KW-0408">Iron</keyword>
<keyword id="KW-0411">Iron-sulfur</keyword>
<keyword id="KW-0479">Metal-binding</keyword>
<keyword id="KW-1185">Reference proteome</keyword>
<keyword id="KW-0949">S-adenosyl-L-methionine</keyword>
<keyword id="KW-0808">Transferase</keyword>
<dbReference type="EC" id="2.8.4.4" evidence="1"/>
<dbReference type="EMBL" id="CP000142">
    <property type="protein sequence ID" value="ABA87297.1"/>
    <property type="molecule type" value="Genomic_DNA"/>
</dbReference>
<dbReference type="SMR" id="Q3A8J5"/>
<dbReference type="STRING" id="338963.Pcar_0034"/>
<dbReference type="KEGG" id="pca:Pcar_0034"/>
<dbReference type="eggNOG" id="COG0621">
    <property type="taxonomic scope" value="Bacteria"/>
</dbReference>
<dbReference type="HOGENOM" id="CLU_018697_0_1_7"/>
<dbReference type="OrthoDB" id="9805215at2"/>
<dbReference type="Proteomes" id="UP000002534">
    <property type="component" value="Chromosome"/>
</dbReference>
<dbReference type="GO" id="GO:0005829">
    <property type="term" value="C:cytosol"/>
    <property type="evidence" value="ECO:0007669"/>
    <property type="project" value="TreeGrafter"/>
</dbReference>
<dbReference type="GO" id="GO:0051539">
    <property type="term" value="F:4 iron, 4 sulfur cluster binding"/>
    <property type="evidence" value="ECO:0007669"/>
    <property type="project" value="UniProtKB-UniRule"/>
</dbReference>
<dbReference type="GO" id="GO:0035599">
    <property type="term" value="F:aspartic acid methylthiotransferase activity"/>
    <property type="evidence" value="ECO:0007669"/>
    <property type="project" value="TreeGrafter"/>
</dbReference>
<dbReference type="GO" id="GO:0046872">
    <property type="term" value="F:metal ion binding"/>
    <property type="evidence" value="ECO:0007669"/>
    <property type="project" value="UniProtKB-KW"/>
</dbReference>
<dbReference type="GO" id="GO:0103039">
    <property type="term" value="F:protein methylthiotransferase activity"/>
    <property type="evidence" value="ECO:0007669"/>
    <property type="project" value="UniProtKB-EC"/>
</dbReference>
<dbReference type="GO" id="GO:0006400">
    <property type="term" value="P:tRNA modification"/>
    <property type="evidence" value="ECO:0007669"/>
    <property type="project" value="InterPro"/>
</dbReference>
<dbReference type="CDD" id="cd01335">
    <property type="entry name" value="Radical_SAM"/>
    <property type="match status" value="1"/>
</dbReference>
<dbReference type="FunFam" id="3.80.30.20:FF:000001">
    <property type="entry name" value="tRNA-2-methylthio-N(6)-dimethylallyladenosine synthase 2"/>
    <property type="match status" value="1"/>
</dbReference>
<dbReference type="Gene3D" id="3.40.50.12160">
    <property type="entry name" value="Methylthiotransferase, N-terminal domain"/>
    <property type="match status" value="1"/>
</dbReference>
<dbReference type="Gene3D" id="2.40.50.140">
    <property type="entry name" value="Nucleic acid-binding proteins"/>
    <property type="match status" value="1"/>
</dbReference>
<dbReference type="Gene3D" id="3.80.30.20">
    <property type="entry name" value="tm_1862 like domain"/>
    <property type="match status" value="1"/>
</dbReference>
<dbReference type="HAMAP" id="MF_01865">
    <property type="entry name" value="MTTase_RimO"/>
    <property type="match status" value="1"/>
</dbReference>
<dbReference type="InterPro" id="IPR006638">
    <property type="entry name" value="Elp3/MiaA/NifB-like_rSAM"/>
</dbReference>
<dbReference type="InterPro" id="IPR005839">
    <property type="entry name" value="Methylthiotransferase"/>
</dbReference>
<dbReference type="InterPro" id="IPR020612">
    <property type="entry name" value="Methylthiotransferase_CS"/>
</dbReference>
<dbReference type="InterPro" id="IPR013848">
    <property type="entry name" value="Methylthiotransferase_N"/>
</dbReference>
<dbReference type="InterPro" id="IPR038135">
    <property type="entry name" value="Methylthiotransferase_N_sf"/>
</dbReference>
<dbReference type="InterPro" id="IPR012340">
    <property type="entry name" value="NA-bd_OB-fold"/>
</dbReference>
<dbReference type="InterPro" id="IPR005840">
    <property type="entry name" value="Ribosomal_uS12_MeSTrfase_RimO"/>
</dbReference>
<dbReference type="InterPro" id="IPR007197">
    <property type="entry name" value="rSAM"/>
</dbReference>
<dbReference type="InterPro" id="IPR023404">
    <property type="entry name" value="rSAM_horseshoe"/>
</dbReference>
<dbReference type="InterPro" id="IPR002792">
    <property type="entry name" value="TRAM_dom"/>
</dbReference>
<dbReference type="NCBIfam" id="TIGR01125">
    <property type="entry name" value="30S ribosomal protein S12 methylthiotransferase RimO"/>
    <property type="match status" value="1"/>
</dbReference>
<dbReference type="NCBIfam" id="TIGR00089">
    <property type="entry name" value="MiaB/RimO family radical SAM methylthiotransferase"/>
    <property type="match status" value="1"/>
</dbReference>
<dbReference type="PANTHER" id="PTHR43837">
    <property type="entry name" value="RIBOSOMAL PROTEIN S12 METHYLTHIOTRANSFERASE RIMO"/>
    <property type="match status" value="1"/>
</dbReference>
<dbReference type="PANTHER" id="PTHR43837:SF1">
    <property type="entry name" value="RIBOSOMAL PROTEIN US12 METHYLTHIOTRANSFERASE RIMO"/>
    <property type="match status" value="1"/>
</dbReference>
<dbReference type="Pfam" id="PF04055">
    <property type="entry name" value="Radical_SAM"/>
    <property type="match status" value="1"/>
</dbReference>
<dbReference type="Pfam" id="PF18693">
    <property type="entry name" value="TRAM_2"/>
    <property type="match status" value="1"/>
</dbReference>
<dbReference type="Pfam" id="PF00919">
    <property type="entry name" value="UPF0004"/>
    <property type="match status" value="1"/>
</dbReference>
<dbReference type="SFLD" id="SFLDG01082">
    <property type="entry name" value="B12-binding_domain_containing"/>
    <property type="match status" value="1"/>
</dbReference>
<dbReference type="SFLD" id="SFLDS00029">
    <property type="entry name" value="Radical_SAM"/>
    <property type="match status" value="1"/>
</dbReference>
<dbReference type="SFLD" id="SFLDF00274">
    <property type="entry name" value="ribosomal_protein_S12_methylth"/>
    <property type="match status" value="1"/>
</dbReference>
<dbReference type="SMART" id="SM00729">
    <property type="entry name" value="Elp3"/>
    <property type="match status" value="1"/>
</dbReference>
<dbReference type="SUPFAM" id="SSF102114">
    <property type="entry name" value="Radical SAM enzymes"/>
    <property type="match status" value="1"/>
</dbReference>
<dbReference type="PROSITE" id="PS51449">
    <property type="entry name" value="MTTASE_N"/>
    <property type="match status" value="1"/>
</dbReference>
<dbReference type="PROSITE" id="PS01278">
    <property type="entry name" value="MTTASE_RADICAL"/>
    <property type="match status" value="1"/>
</dbReference>
<dbReference type="PROSITE" id="PS51918">
    <property type="entry name" value="RADICAL_SAM"/>
    <property type="match status" value="1"/>
</dbReference>
<dbReference type="PROSITE" id="PS50926">
    <property type="entry name" value="TRAM"/>
    <property type="match status" value="1"/>
</dbReference>
<proteinExistence type="inferred from homology"/>